<evidence type="ECO:0000255" key="1">
    <source>
        <dbReference type="PROSITE-ProRule" id="PRU00561"/>
    </source>
</evidence>
<evidence type="ECO:0000269" key="2">
    <source>
    </source>
</evidence>
<evidence type="ECO:0000269" key="3">
    <source>
    </source>
</evidence>
<evidence type="ECO:0000269" key="4">
    <source>
    </source>
</evidence>
<evidence type="ECO:0000269" key="5">
    <source>
    </source>
</evidence>
<evidence type="ECO:0000305" key="6"/>
<evidence type="ECO:0007829" key="7">
    <source>
        <dbReference type="PDB" id="4BQK"/>
    </source>
</evidence>
<proteinExistence type="evidence at protein level"/>
<accession>Q71VM4</accession>
<accession>O82783</accession>
<feature type="chain" id="PRO_0000120740" description="Importin subunit alpha-1a">
    <location>
        <begin position="1"/>
        <end position="526"/>
    </location>
</feature>
<feature type="domain" description="IBB" evidence="1">
    <location>
        <begin position="1"/>
        <end position="58"/>
    </location>
</feature>
<feature type="repeat" description="ARM 1">
    <location>
        <begin position="105"/>
        <end position="145"/>
    </location>
</feature>
<feature type="repeat" description="ARM 2">
    <location>
        <begin position="148"/>
        <end position="187"/>
    </location>
</feature>
<feature type="repeat" description="ARM 3">
    <location>
        <begin position="190"/>
        <end position="230"/>
    </location>
</feature>
<feature type="repeat" description="ARM 4">
    <location>
        <begin position="232"/>
        <end position="271"/>
    </location>
</feature>
<feature type="repeat" description="ARM 5">
    <location>
        <begin position="274"/>
        <end position="313"/>
    </location>
</feature>
<feature type="repeat" description="ARM 6">
    <location>
        <begin position="316"/>
        <end position="356"/>
    </location>
</feature>
<feature type="repeat" description="ARM 7">
    <location>
        <begin position="359"/>
        <end position="398"/>
    </location>
</feature>
<feature type="repeat" description="ARM 8">
    <location>
        <begin position="402"/>
        <end position="441"/>
    </location>
</feature>
<feature type="sequence conflict" description="In Ref. 2; AAQ13406." evidence="6" ref="2">
    <original>LQ</original>
    <variation>FE</variation>
    <location>
        <begin position="473"/>
        <end position="474"/>
    </location>
</feature>
<feature type="helix" evidence="7">
    <location>
        <begin position="74"/>
        <end position="82"/>
    </location>
</feature>
<feature type="helix" evidence="7">
    <location>
        <begin position="86"/>
        <end position="100"/>
    </location>
</feature>
<feature type="strand" evidence="7">
    <location>
        <begin position="103"/>
        <end position="105"/>
    </location>
</feature>
<feature type="helix" evidence="7">
    <location>
        <begin position="108"/>
        <end position="113"/>
    </location>
</feature>
<feature type="helix" evidence="7">
    <location>
        <begin position="117"/>
        <end position="123"/>
    </location>
</feature>
<feature type="helix" evidence="7">
    <location>
        <begin position="130"/>
        <end position="144"/>
    </location>
</feature>
<feature type="helix" evidence="7">
    <location>
        <begin position="148"/>
        <end position="156"/>
    </location>
</feature>
<feature type="helix" evidence="7">
    <location>
        <begin position="159"/>
        <end position="166"/>
    </location>
</feature>
<feature type="helix" evidence="7">
    <location>
        <begin position="172"/>
        <end position="186"/>
    </location>
</feature>
<feature type="helix" evidence="7">
    <location>
        <begin position="190"/>
        <end position="198"/>
    </location>
</feature>
<feature type="helix" evidence="7">
    <location>
        <begin position="202"/>
        <end position="207"/>
    </location>
</feature>
<feature type="helix" evidence="7">
    <location>
        <begin position="215"/>
        <end position="229"/>
    </location>
</feature>
<feature type="strand" evidence="7">
    <location>
        <begin position="231"/>
        <end position="233"/>
    </location>
</feature>
<feature type="helix" evidence="7">
    <location>
        <begin position="237"/>
        <end position="240"/>
    </location>
</feature>
<feature type="helix" evidence="7">
    <location>
        <begin position="243"/>
        <end position="250"/>
    </location>
</feature>
<feature type="helix" evidence="7">
    <location>
        <begin position="256"/>
        <end position="269"/>
    </location>
</feature>
<feature type="strand" evidence="7">
    <location>
        <begin position="271"/>
        <end position="273"/>
    </location>
</feature>
<feature type="helix" evidence="7">
    <location>
        <begin position="274"/>
        <end position="282"/>
    </location>
</feature>
<feature type="helix" evidence="7">
    <location>
        <begin position="286"/>
        <end position="292"/>
    </location>
</feature>
<feature type="helix" evidence="7">
    <location>
        <begin position="298"/>
        <end position="311"/>
    </location>
</feature>
<feature type="helix" evidence="7">
    <location>
        <begin position="316"/>
        <end position="323"/>
    </location>
</feature>
<feature type="turn" evidence="7">
    <location>
        <begin position="324"/>
        <end position="326"/>
    </location>
</feature>
<feature type="helix" evidence="7">
    <location>
        <begin position="327"/>
        <end position="336"/>
    </location>
</feature>
<feature type="helix" evidence="7">
    <location>
        <begin position="341"/>
        <end position="355"/>
    </location>
</feature>
<feature type="helix" evidence="7">
    <location>
        <begin position="359"/>
        <end position="368"/>
    </location>
</feature>
<feature type="helix" evidence="7">
    <location>
        <begin position="371"/>
        <end position="380"/>
    </location>
</feature>
<feature type="helix" evidence="7">
    <location>
        <begin position="383"/>
        <end position="399"/>
    </location>
</feature>
<feature type="helix" evidence="7">
    <location>
        <begin position="402"/>
        <end position="410"/>
    </location>
</feature>
<feature type="helix" evidence="7">
    <location>
        <begin position="414"/>
        <end position="419"/>
    </location>
</feature>
<feature type="helix" evidence="7">
    <location>
        <begin position="420"/>
        <end position="422"/>
    </location>
</feature>
<feature type="helix" evidence="7">
    <location>
        <begin position="426"/>
        <end position="449"/>
    </location>
</feature>
<feature type="helix" evidence="7">
    <location>
        <begin position="456"/>
        <end position="463"/>
    </location>
</feature>
<feature type="helix" evidence="7">
    <location>
        <begin position="466"/>
        <end position="473"/>
    </location>
</feature>
<feature type="helix" evidence="7">
    <location>
        <begin position="479"/>
        <end position="492"/>
    </location>
</feature>
<dbReference type="EMBL" id="AB004660">
    <property type="protein sequence ID" value="BAA31165.1"/>
    <property type="molecule type" value="mRNA"/>
</dbReference>
<dbReference type="EMBL" id="AF005265">
    <property type="protein sequence ID" value="AAQ13406.1"/>
    <property type="molecule type" value="mRNA"/>
</dbReference>
<dbReference type="EMBL" id="AB004814">
    <property type="protein sequence ID" value="BAA31166.1"/>
    <property type="molecule type" value="Genomic_DNA"/>
</dbReference>
<dbReference type="EMBL" id="AP000816">
    <property type="protein sequence ID" value="BAA87855.1"/>
    <property type="molecule type" value="Genomic_DNA"/>
</dbReference>
<dbReference type="EMBL" id="AP014957">
    <property type="protein sequence ID" value="BAS71366.1"/>
    <property type="molecule type" value="Genomic_DNA"/>
</dbReference>
<dbReference type="RefSeq" id="XP_015621115.1">
    <property type="nucleotide sequence ID" value="XM_015765629.1"/>
</dbReference>
<dbReference type="PDB" id="2YNS">
    <property type="method" value="X-ray"/>
    <property type="resolution" value="2.10 A"/>
    <property type="chains" value="A/B=73-526"/>
</dbReference>
<dbReference type="PDB" id="4B8J">
    <property type="method" value="X-ray"/>
    <property type="resolution" value="2.00 A"/>
    <property type="chains" value="A=1-526"/>
</dbReference>
<dbReference type="PDB" id="4B8O">
    <property type="method" value="X-ray"/>
    <property type="resolution" value="2.08 A"/>
    <property type="chains" value="A=73-526"/>
</dbReference>
<dbReference type="PDB" id="4B8P">
    <property type="method" value="X-ray"/>
    <property type="resolution" value="2.30 A"/>
    <property type="chains" value="A/B=73-526"/>
</dbReference>
<dbReference type="PDB" id="4BPL">
    <property type="method" value="X-ray"/>
    <property type="resolution" value="2.30 A"/>
    <property type="chains" value="A=73-526"/>
</dbReference>
<dbReference type="PDB" id="4BQK">
    <property type="method" value="X-ray"/>
    <property type="resolution" value="2.00 A"/>
    <property type="chains" value="A/B=73-526"/>
</dbReference>
<dbReference type="PDBsum" id="2YNS"/>
<dbReference type="PDBsum" id="4B8J"/>
<dbReference type="PDBsum" id="4B8O"/>
<dbReference type="PDBsum" id="4B8P"/>
<dbReference type="PDBsum" id="4BPL"/>
<dbReference type="PDBsum" id="4BQK"/>
<dbReference type="SMR" id="Q71VM4"/>
<dbReference type="FunCoup" id="Q71VM4">
    <property type="interactions" value="2198"/>
</dbReference>
<dbReference type="IntAct" id="Q71VM4">
    <property type="interactions" value="2"/>
</dbReference>
<dbReference type="MINT" id="Q71VM4"/>
<dbReference type="STRING" id="39947.Q71VM4"/>
<dbReference type="PaxDb" id="39947-Q71VM4"/>
<dbReference type="EnsemblPlants" id="Os01t0253300-01">
    <property type="protein sequence ID" value="Os01t0253300-01"/>
    <property type="gene ID" value="Os01g0253300"/>
</dbReference>
<dbReference type="EnsemblPlants" id="Os01t0253300-02">
    <property type="protein sequence ID" value="Os01t0253300-02"/>
    <property type="gene ID" value="Os01g0253300"/>
</dbReference>
<dbReference type="Gramene" id="Os01t0253300-01">
    <property type="protein sequence ID" value="Os01t0253300-01"/>
    <property type="gene ID" value="Os01g0253300"/>
</dbReference>
<dbReference type="Gramene" id="Os01t0253300-02">
    <property type="protein sequence ID" value="Os01t0253300-02"/>
    <property type="gene ID" value="Os01g0253300"/>
</dbReference>
<dbReference type="eggNOG" id="KOG0166">
    <property type="taxonomic scope" value="Eukaryota"/>
</dbReference>
<dbReference type="HOGENOM" id="CLU_018084_5_0_1"/>
<dbReference type="InParanoid" id="Q71VM4"/>
<dbReference type="OMA" id="EMIQMLY"/>
<dbReference type="OrthoDB" id="29145at2759"/>
<dbReference type="EvolutionaryTrace" id="Q71VM4"/>
<dbReference type="Proteomes" id="UP000000763">
    <property type="component" value="Chromosome 1"/>
</dbReference>
<dbReference type="Proteomes" id="UP000059680">
    <property type="component" value="Chromosome 1"/>
</dbReference>
<dbReference type="ExpressionAtlas" id="Q71VM4">
    <property type="expression patterns" value="baseline and differential"/>
</dbReference>
<dbReference type="GO" id="GO:0005634">
    <property type="term" value="C:nucleus"/>
    <property type="evidence" value="ECO:0000318"/>
    <property type="project" value="GO_Central"/>
</dbReference>
<dbReference type="GO" id="GO:0048471">
    <property type="term" value="C:perinuclear region of cytoplasm"/>
    <property type="evidence" value="ECO:0007669"/>
    <property type="project" value="UniProtKB-SubCell"/>
</dbReference>
<dbReference type="GO" id="GO:0061608">
    <property type="term" value="F:nuclear import signal receptor activity"/>
    <property type="evidence" value="ECO:0000318"/>
    <property type="project" value="GO_Central"/>
</dbReference>
<dbReference type="GO" id="GO:0008139">
    <property type="term" value="F:nuclear localization sequence binding"/>
    <property type="evidence" value="ECO:0000318"/>
    <property type="project" value="GO_Central"/>
</dbReference>
<dbReference type="GO" id="GO:0006607">
    <property type="term" value="P:NLS-bearing protein import into nucleus"/>
    <property type="evidence" value="ECO:0000318"/>
    <property type="project" value="GO_Central"/>
</dbReference>
<dbReference type="FunFam" id="1.20.5.690:FF:000002">
    <property type="entry name" value="Importin subunit alpha"/>
    <property type="match status" value="1"/>
</dbReference>
<dbReference type="FunFam" id="1.25.10.10:FF:000040">
    <property type="entry name" value="Importin subunit alpha"/>
    <property type="match status" value="1"/>
</dbReference>
<dbReference type="Gene3D" id="1.20.5.690">
    <property type="entry name" value="Importin-alpha, importin-beta-binding domain"/>
    <property type="match status" value="1"/>
</dbReference>
<dbReference type="Gene3D" id="1.25.10.10">
    <property type="entry name" value="Leucine-rich Repeat Variant"/>
    <property type="match status" value="1"/>
</dbReference>
<dbReference type="InterPro" id="IPR011989">
    <property type="entry name" value="ARM-like"/>
</dbReference>
<dbReference type="InterPro" id="IPR016024">
    <property type="entry name" value="ARM-type_fold"/>
</dbReference>
<dbReference type="InterPro" id="IPR032413">
    <property type="entry name" value="Arm_3"/>
</dbReference>
<dbReference type="InterPro" id="IPR000225">
    <property type="entry name" value="Armadillo"/>
</dbReference>
<dbReference type="InterPro" id="IPR002652">
    <property type="entry name" value="Importin-a_IBB"/>
</dbReference>
<dbReference type="InterPro" id="IPR036975">
    <property type="entry name" value="Importin-a_IBB_sf"/>
</dbReference>
<dbReference type="InterPro" id="IPR024931">
    <property type="entry name" value="Importin_alpha"/>
</dbReference>
<dbReference type="PANTHER" id="PTHR23316">
    <property type="entry name" value="IMPORTIN ALPHA"/>
    <property type="match status" value="1"/>
</dbReference>
<dbReference type="Pfam" id="PF00514">
    <property type="entry name" value="Arm"/>
    <property type="match status" value="8"/>
</dbReference>
<dbReference type="Pfam" id="PF16186">
    <property type="entry name" value="Arm_3"/>
    <property type="match status" value="1"/>
</dbReference>
<dbReference type="Pfam" id="PF01749">
    <property type="entry name" value="IBB"/>
    <property type="match status" value="1"/>
</dbReference>
<dbReference type="PIRSF" id="PIRSF005673">
    <property type="entry name" value="Importin_alpha"/>
    <property type="match status" value="1"/>
</dbReference>
<dbReference type="SMART" id="SM00185">
    <property type="entry name" value="ARM"/>
    <property type="match status" value="8"/>
</dbReference>
<dbReference type="SUPFAM" id="SSF48371">
    <property type="entry name" value="ARM repeat"/>
    <property type="match status" value="1"/>
</dbReference>
<dbReference type="PROSITE" id="PS50176">
    <property type="entry name" value="ARM_REPEAT"/>
    <property type="match status" value="4"/>
</dbReference>
<dbReference type="PROSITE" id="PS51214">
    <property type="entry name" value="IBB"/>
    <property type="match status" value="1"/>
</dbReference>
<gene>
    <name type="ordered locus">Os01g0253300</name>
    <name type="ordered locus">LOC_Os01g14950</name>
</gene>
<reference key="1">
    <citation type="journal article" date="1998" name="Gene">
        <title>Cloning of a cDNA encoding an importin-alpha and down-regulation of the gene by light in rice leaves.</title>
        <authorList>
            <person name="Shoji K."/>
            <person name="Iwasaki T."/>
            <person name="Matsuki R."/>
            <person name="Miyao M."/>
            <person name="Yamamoto N."/>
        </authorList>
    </citation>
    <scope>NUCLEOTIDE SEQUENCE [GENOMIC DNA / MRNA]</scope>
    <scope>TISSUE SPECIFICITY</scope>
    <scope>INDUCTION</scope>
    <source>
        <strain>cv. Nipponbare</strain>
        <tissue>Callus</tissue>
        <tissue>Leaf</tissue>
    </source>
</reference>
<reference key="2">
    <citation type="submission" date="1997-05" db="EMBL/GenBank/DDBJ databases">
        <title>Importin alpha-3, a novel variant of the small importin subunit evolutionarily conserved from hydrozoa to man.</title>
        <authorList>
            <person name="Fischer R."/>
        </authorList>
    </citation>
    <scope>NUCLEOTIDE SEQUENCE [MRNA]</scope>
</reference>
<reference key="3">
    <citation type="journal article" date="2002" name="Nature">
        <title>The genome sequence and structure of rice chromosome 1.</title>
        <authorList>
            <person name="Sasaki T."/>
            <person name="Matsumoto T."/>
            <person name="Yamamoto K."/>
            <person name="Sakata K."/>
            <person name="Baba T."/>
            <person name="Katayose Y."/>
            <person name="Wu J."/>
            <person name="Niimura Y."/>
            <person name="Cheng Z."/>
            <person name="Nagamura Y."/>
            <person name="Antonio B.A."/>
            <person name="Kanamori H."/>
            <person name="Hosokawa S."/>
            <person name="Masukawa M."/>
            <person name="Arikawa K."/>
            <person name="Chiden Y."/>
            <person name="Hayashi M."/>
            <person name="Okamoto M."/>
            <person name="Ando T."/>
            <person name="Aoki H."/>
            <person name="Arita K."/>
            <person name="Hamada M."/>
            <person name="Harada C."/>
            <person name="Hijishita S."/>
            <person name="Honda M."/>
            <person name="Ichikawa Y."/>
            <person name="Idonuma A."/>
            <person name="Iijima M."/>
            <person name="Ikeda M."/>
            <person name="Ikeno M."/>
            <person name="Ito S."/>
            <person name="Ito T."/>
            <person name="Ito Y."/>
            <person name="Ito Y."/>
            <person name="Iwabuchi A."/>
            <person name="Kamiya K."/>
            <person name="Karasawa W."/>
            <person name="Katagiri S."/>
            <person name="Kikuta A."/>
            <person name="Kobayashi N."/>
            <person name="Kono I."/>
            <person name="Machita K."/>
            <person name="Maehara T."/>
            <person name="Mizuno H."/>
            <person name="Mizubayashi T."/>
            <person name="Mukai Y."/>
            <person name="Nagasaki H."/>
            <person name="Nakashima M."/>
            <person name="Nakama Y."/>
            <person name="Nakamichi Y."/>
            <person name="Nakamura M."/>
            <person name="Namiki N."/>
            <person name="Negishi M."/>
            <person name="Ohta I."/>
            <person name="Ono N."/>
            <person name="Saji S."/>
            <person name="Sakai K."/>
            <person name="Shibata M."/>
            <person name="Shimokawa T."/>
            <person name="Shomura A."/>
            <person name="Song J."/>
            <person name="Takazaki Y."/>
            <person name="Terasawa K."/>
            <person name="Tsuji K."/>
            <person name="Waki K."/>
            <person name="Yamagata H."/>
            <person name="Yamane H."/>
            <person name="Yoshiki S."/>
            <person name="Yoshihara R."/>
            <person name="Yukawa K."/>
            <person name="Zhong H."/>
            <person name="Iwama H."/>
            <person name="Endo T."/>
            <person name="Ito H."/>
            <person name="Hahn J.H."/>
            <person name="Kim H.-I."/>
            <person name="Eun M.-Y."/>
            <person name="Yano M."/>
            <person name="Jiang J."/>
            <person name="Gojobori T."/>
        </authorList>
    </citation>
    <scope>NUCLEOTIDE SEQUENCE [LARGE SCALE GENOMIC DNA]</scope>
    <source>
        <strain>cv. Nipponbare</strain>
    </source>
</reference>
<reference key="4">
    <citation type="journal article" date="2005" name="Nature">
        <title>The map-based sequence of the rice genome.</title>
        <authorList>
            <consortium name="International rice genome sequencing project (IRGSP)"/>
        </authorList>
    </citation>
    <scope>NUCLEOTIDE SEQUENCE [LARGE SCALE GENOMIC DNA]</scope>
    <source>
        <strain>cv. Nipponbare</strain>
    </source>
</reference>
<reference key="5">
    <citation type="journal article" date="2013" name="Rice">
        <title>Improvement of the Oryza sativa Nipponbare reference genome using next generation sequence and optical map data.</title>
        <authorList>
            <person name="Kawahara Y."/>
            <person name="de la Bastide M."/>
            <person name="Hamilton J.P."/>
            <person name="Kanamori H."/>
            <person name="McCombie W.R."/>
            <person name="Ouyang S."/>
            <person name="Schwartz D.C."/>
            <person name="Tanaka T."/>
            <person name="Wu J."/>
            <person name="Zhou S."/>
            <person name="Childs K.L."/>
            <person name="Davidson R.M."/>
            <person name="Lin H."/>
            <person name="Quesada-Ocampo L."/>
            <person name="Vaillancourt B."/>
            <person name="Sakai H."/>
            <person name="Lee S.S."/>
            <person name="Kim J."/>
            <person name="Numa H."/>
            <person name="Itoh T."/>
            <person name="Buell C.R."/>
            <person name="Matsumoto T."/>
        </authorList>
    </citation>
    <scope>GENOME REANNOTATION</scope>
    <source>
        <strain>cv. Nipponbare</strain>
    </source>
</reference>
<reference key="6">
    <citation type="journal article" date="1998" name="J. Biol. Chem.">
        <title>Functional characterization of a plant importin alpha homologue. Nuclear localization signal (NLS)-selective binding and mediation of nuclear import of nls proteins in vitro.</title>
        <authorList>
            <person name="Jiang C.-J."/>
            <person name="Imamoto N."/>
            <person name="Matsuki R."/>
            <person name="Yoneda Y."/>
            <person name="Yamamoto N."/>
        </authorList>
    </citation>
    <scope>FUNCTION</scope>
    <scope>SUBCELLULAR LOCATION</scope>
</reference>
<reference key="7">
    <citation type="journal article" date="2001" name="J. Biol. Chem.">
        <title>Molecular cloning of a novel importin alpha homologue from rice, by which constitutive photomorphogenic 1 (COP1) nuclear localization signal (NLS)-protein is preferentially nuclear imported.</title>
        <authorList>
            <person name="Jiang C.-J."/>
            <person name="Shoji K."/>
            <person name="Matsuki R."/>
            <person name="Baba A."/>
            <person name="Inagaki N."/>
            <person name="Ban H."/>
            <person name="Iwasaki T."/>
            <person name="Imamoto N."/>
            <person name="Yoneda Y."/>
            <person name="Deng X.-W."/>
            <person name="Yamamoto N."/>
        </authorList>
    </citation>
    <scope>FUNCTION</scope>
    <scope>TISSUE SPECIFICITY</scope>
    <scope>INDUCTION</scope>
    <scope>INTERACTION WITH IMPORTIN BETA-1</scope>
</reference>
<reference key="8">
    <citation type="journal article" date="2005" name="J. Gen. Virol.">
        <title>Coat proteins of Rice tungro bacilliform virus and Mungbean yellow mosaic virus contain multiple nuclear-localization signals and interact with importin alpha.</title>
        <authorList>
            <person name="Guerra-Peraza O."/>
            <person name="Kirk D."/>
            <person name="Seltzer V."/>
            <person name="Veluthambi K."/>
            <person name="Schmit A.C."/>
            <person name="Hohn T."/>
            <person name="Herzog E."/>
        </authorList>
    </citation>
    <scope>INTERACTION WITH MUNGBEAN YELLOW MOSAIC VIRUS CAPSID PROTEIN</scope>
</reference>
<protein>
    <recommendedName>
        <fullName>Importin subunit alpha-1a</fullName>
    </recommendedName>
</protein>
<sequence length="526" mass="57571">MSLRPSERVEVRRNRYKVAVDAEEGRRRREDNMVEIRKSRREESLLKKRREGLQAQAPVPASAATGVDKKLESLPAMIGGVYSDDNNLQLEATTQFRKLLSIERSPPIEEVIQSGVVPRFVQFLTREDFPQLQFEAAWALTNIASGTSENTKVVIDHGAVPIFVKLLGSSSDDVREQAVWALGNVAGDSPKCRDLVLANGALLPLLAQLNEHTKLSMLRNATWTLSNFCRGKPQPSFEQTRPALPALARLIHSNDEEVLTDACWALSYLSDGTNDKIQAVIEAGVCPRLVELLLHPSPSVLIPALRTVGNIVTGDDAQTQCIIDHQALPCLLSLLTQNLKKSIKKEACWTISNITAGNKDQIQAVINAGIIGPLVNLLQTAEFDIKKEAAWAISNATSGGSHDQIKYLVSEGCIKPLCDLLICPDIRIVTVCLEGLENILKVGETDKTLAAGDVNVFSQMIDEAEGLEKIENLQSHDNNEIYEKAVKILEAYWMDEEDDTMGATTVAAPQGATFDFGQGGGAAQFK</sequence>
<name>IMA1A_ORYSJ</name>
<keyword id="KW-0002">3D-structure</keyword>
<keyword id="KW-0963">Cytoplasm</keyword>
<keyword id="KW-0945">Host-virus interaction</keyword>
<keyword id="KW-0653">Protein transport</keyword>
<keyword id="KW-1185">Reference proteome</keyword>
<keyword id="KW-0677">Repeat</keyword>
<keyword id="KW-0813">Transport</keyword>
<comment type="function">
    <text evidence="2 5">Functions in nuclear protein import. Binds specifically and directly to substrates containing either a simple or bipartite NLS motif. Promotes docking of import substrates to the nuclear envelope.</text>
</comment>
<comment type="subunit">
    <text evidence="2 3">Forms a complex with importin subunit beta-1. The whole complex, most stable and composed of importin alpha, importin beta and NLS substrate, is referred to as PTAC or pore targeting complex. Interacts with mungbean yellow mosaic virus capsid protein.</text>
</comment>
<comment type="subcellular location">
    <subcellularLocation>
        <location evidence="5">Cytoplasm</location>
        <location evidence="5">Perinuclear region</location>
    </subcellularLocation>
</comment>
<comment type="tissue specificity">
    <text evidence="2 4">Highly expressed in callus, followed by root and etiolated leaf. Low expression in green leaf.</text>
</comment>
<comment type="induction">
    <text evidence="2 4">In both etiolated and green leaves, down-regulated by light. In green leaf, increased by dark treatment.</text>
</comment>
<comment type="similarity">
    <text evidence="6">Belongs to the importin alpha family.</text>
</comment>
<organism>
    <name type="scientific">Oryza sativa subsp. japonica</name>
    <name type="common">Rice</name>
    <dbReference type="NCBI Taxonomy" id="39947"/>
    <lineage>
        <taxon>Eukaryota</taxon>
        <taxon>Viridiplantae</taxon>
        <taxon>Streptophyta</taxon>
        <taxon>Embryophyta</taxon>
        <taxon>Tracheophyta</taxon>
        <taxon>Spermatophyta</taxon>
        <taxon>Magnoliopsida</taxon>
        <taxon>Liliopsida</taxon>
        <taxon>Poales</taxon>
        <taxon>Poaceae</taxon>
        <taxon>BOP clade</taxon>
        <taxon>Oryzoideae</taxon>
        <taxon>Oryzeae</taxon>
        <taxon>Oryzinae</taxon>
        <taxon>Oryza</taxon>
        <taxon>Oryza sativa</taxon>
    </lineage>
</organism>